<feature type="signal peptide" evidence="1">
    <location>
        <begin position="1"/>
        <end position="18"/>
    </location>
</feature>
<feature type="chain" id="PRO_0000429958" description="Predicted GPI-anchored protein 58">
    <location>
        <begin position="19"/>
        <end position="219"/>
    </location>
</feature>
<feature type="propeptide" id="PRO_0000429959" description="Removed in mature form" evidence="1">
    <location>
        <begin position="220"/>
        <end position="240"/>
    </location>
</feature>
<feature type="region of interest" description="Disordered" evidence="2">
    <location>
        <begin position="41"/>
        <end position="216"/>
    </location>
</feature>
<feature type="compositionally biased region" description="Pro residues" evidence="2">
    <location>
        <begin position="51"/>
        <end position="86"/>
    </location>
</feature>
<feature type="compositionally biased region" description="Low complexity" evidence="2">
    <location>
        <begin position="87"/>
        <end position="103"/>
    </location>
</feature>
<feature type="compositionally biased region" description="Pro residues" evidence="2">
    <location>
        <begin position="104"/>
        <end position="137"/>
    </location>
</feature>
<feature type="compositionally biased region" description="Pro residues" evidence="2">
    <location>
        <begin position="153"/>
        <end position="192"/>
    </location>
</feature>
<feature type="compositionally biased region" description="Low complexity" evidence="2">
    <location>
        <begin position="193"/>
        <end position="216"/>
    </location>
</feature>
<feature type="lipid moiety-binding region" description="GPI-anchor amidated glycine" evidence="1">
    <location>
        <position position="219"/>
    </location>
</feature>
<feature type="glycosylation site" description="N-linked (GlcNAc...) asparagine" evidence="1">
    <location>
        <position position="207"/>
    </location>
</feature>
<name>PGA58_CANAL</name>
<organism>
    <name type="scientific">Candida albicans (strain SC5314 / ATCC MYA-2876)</name>
    <name type="common">Yeast</name>
    <dbReference type="NCBI Taxonomy" id="237561"/>
    <lineage>
        <taxon>Eukaryota</taxon>
        <taxon>Fungi</taxon>
        <taxon>Dikarya</taxon>
        <taxon>Ascomycota</taxon>
        <taxon>Saccharomycotina</taxon>
        <taxon>Pichiomycetes</taxon>
        <taxon>Debaryomycetaceae</taxon>
        <taxon>Candida/Lodderomyces clade</taxon>
        <taxon>Candida</taxon>
    </lineage>
</organism>
<reference key="1">
    <citation type="journal article" date="2004" name="Proc. Natl. Acad. Sci. U.S.A.">
        <title>The diploid genome sequence of Candida albicans.</title>
        <authorList>
            <person name="Jones T."/>
            <person name="Federspiel N.A."/>
            <person name="Chibana H."/>
            <person name="Dungan J."/>
            <person name="Kalman S."/>
            <person name="Magee B.B."/>
            <person name="Newport G."/>
            <person name="Thorstenson Y.R."/>
            <person name="Agabian N."/>
            <person name="Magee P.T."/>
            <person name="Davis R.W."/>
            <person name="Scherer S."/>
        </authorList>
    </citation>
    <scope>NUCLEOTIDE SEQUENCE [LARGE SCALE GENOMIC DNA]</scope>
    <source>
        <strain>SC5314 / ATCC MYA-2876</strain>
    </source>
</reference>
<reference key="2">
    <citation type="journal article" date="2007" name="Genome Biol.">
        <title>Assembly of the Candida albicans genome into sixteen supercontigs aligned on the eight chromosomes.</title>
        <authorList>
            <person name="van het Hoog M."/>
            <person name="Rast T.J."/>
            <person name="Martchenko M."/>
            <person name="Grindle S."/>
            <person name="Dignard D."/>
            <person name="Hogues H."/>
            <person name="Cuomo C."/>
            <person name="Berriman M."/>
            <person name="Scherer S."/>
            <person name="Magee B.B."/>
            <person name="Whiteway M."/>
            <person name="Chibana H."/>
            <person name="Nantel A."/>
            <person name="Magee P.T."/>
        </authorList>
    </citation>
    <scope>GENOME REANNOTATION</scope>
    <source>
        <strain>SC5314 / ATCC MYA-2876</strain>
    </source>
</reference>
<reference key="3">
    <citation type="journal article" date="2013" name="Genome Biol.">
        <title>Assembly of a phased diploid Candida albicans genome facilitates allele-specific measurements and provides a simple model for repeat and indel structure.</title>
        <authorList>
            <person name="Muzzey D."/>
            <person name="Schwartz K."/>
            <person name="Weissman J.S."/>
            <person name="Sherlock G."/>
        </authorList>
    </citation>
    <scope>NUCLEOTIDE SEQUENCE [LARGE SCALE GENOMIC DNA]</scope>
    <scope>GENOME REANNOTATION</scope>
    <source>
        <strain>SC5314 / ATCC MYA-2876</strain>
    </source>
</reference>
<reference key="4">
    <citation type="journal article" date="2003" name="Yeast">
        <title>Genome-wide identification of fungal GPI proteins.</title>
        <authorList>
            <person name="De Groot P.W."/>
            <person name="Hellingwerf K.J."/>
            <person name="Klis F.M."/>
        </authorList>
    </citation>
    <scope>PREDICTION OF GPI-ANCHOR</scope>
</reference>
<reference key="5">
    <citation type="journal article" date="2013" name="Antimicrob. Agents Chemother.">
        <title>Milbemycins: more than efflux inhibitors for fungal pathogens.</title>
        <authorList>
            <person name="Silva L.V."/>
            <person name="Sanguinetti M."/>
            <person name="Vandeputte P."/>
            <person name="Torelli R."/>
            <person name="Rochat B."/>
            <person name="Sanglard D."/>
        </authorList>
    </citation>
    <scope>INDUCTION</scope>
</reference>
<reference key="6">
    <citation type="journal article" date="2008" name="Mol. Cell">
        <title>Transcription factor substitution during the evolution of fungal ribosome regulation.</title>
        <authorList>
            <person name="Hogues H."/>
            <person name="Lavoie H."/>
            <person name="Sellam A."/>
            <person name="Mangos M."/>
            <person name="Roemer T."/>
            <person name="Purisima E."/>
            <person name="Nantel A."/>
            <person name="Whiteway M."/>
        </authorList>
    </citation>
    <scope>INDUCTION</scope>
</reference>
<accession>Q5AG46</accession>
<accession>A0A1D8PNL2</accession>
<dbReference type="EMBL" id="CP017627">
    <property type="protein sequence ID" value="AOW29725.1"/>
    <property type="molecule type" value="Genomic_DNA"/>
</dbReference>
<dbReference type="RefSeq" id="XP_720639.1">
    <property type="nucleotide sequence ID" value="XM_715546.1"/>
</dbReference>
<dbReference type="STRING" id="237561.Q5AG46"/>
<dbReference type="GlyCosmos" id="Q5AG46">
    <property type="glycosylation" value="1 site, No reported glycans"/>
</dbReference>
<dbReference type="EnsemblFungi" id="C5_03050C_A-T">
    <property type="protein sequence ID" value="C5_03050C_A-T-p1"/>
    <property type="gene ID" value="C5_03050C_A"/>
</dbReference>
<dbReference type="GeneID" id="3637826"/>
<dbReference type="KEGG" id="cal:CAALFM_C503050CA"/>
<dbReference type="CGD" id="CAL0000184734">
    <property type="gene designation" value="PGA58"/>
</dbReference>
<dbReference type="VEuPathDB" id="FungiDB:C5_03050C_A"/>
<dbReference type="HOGENOM" id="CLU_993952_0_0_1"/>
<dbReference type="InParanoid" id="Q5AG46"/>
<dbReference type="OMA" id="IGARPYN"/>
<dbReference type="PRO" id="PR:Q5AG46"/>
<dbReference type="Proteomes" id="UP000000559">
    <property type="component" value="Chromosome 5"/>
</dbReference>
<dbReference type="GO" id="GO:0005886">
    <property type="term" value="C:plasma membrane"/>
    <property type="evidence" value="ECO:0007669"/>
    <property type="project" value="UniProtKB-SubCell"/>
</dbReference>
<dbReference type="GO" id="GO:0098552">
    <property type="term" value="C:side of membrane"/>
    <property type="evidence" value="ECO:0007669"/>
    <property type="project" value="UniProtKB-KW"/>
</dbReference>
<gene>
    <name type="primary">PGA58</name>
    <name type="ordered locus">CAALFM_C503050CA</name>
    <name type="ORF">CaO19.11809</name>
    <name type="ORF">CaO19.4334</name>
</gene>
<sequence length="240" mass="22838">MQFSTLVSLAAVIVSTNAAALLTQTVESSTVVTITSCGPEHTNCPASSPATPAPAPSASAPAPPAPEQPEPSAPAPAPSAPAPEQPEQPATPATPAAPATPATPAAPEPSAPAPEQPASPAAPAPAPSAPAPAPEQPEQPAAPTTKEAESTPAPAPSAPAPPAPEQPESAPAPAPSAPAPEQPESSPAPAPSAPASVPEQPASSVSNSTGPSSVPTFEGAAAKQYITGSVAVIAAALLAL</sequence>
<keyword id="KW-1003">Cell membrane</keyword>
<keyword id="KW-0325">Glycoprotein</keyword>
<keyword id="KW-0336">GPI-anchor</keyword>
<keyword id="KW-0449">Lipoprotein</keyword>
<keyword id="KW-0472">Membrane</keyword>
<keyword id="KW-1185">Reference proteome</keyword>
<keyword id="KW-0732">Signal</keyword>
<proteinExistence type="evidence at protein level"/>
<comment type="subcellular location">
    <subcellularLocation>
        <location evidence="5">Cell membrane</location>
        <topology evidence="5">Lipid-anchor</topology>
        <topology evidence="5">GPI-anchor</topology>
    </subcellularLocation>
</comment>
<comment type="induction">
    <text evidence="3 4">Up-regulated by TBF1 and upon milbemycins A3 oxim derivative (A3Ox) treatment.</text>
</comment>
<protein>
    <recommendedName>
        <fullName>Predicted GPI-anchored protein 58</fullName>
    </recommendedName>
</protein>
<evidence type="ECO:0000255" key="1"/>
<evidence type="ECO:0000256" key="2">
    <source>
        <dbReference type="SAM" id="MobiDB-lite"/>
    </source>
</evidence>
<evidence type="ECO:0000269" key="3">
    <source>
    </source>
</evidence>
<evidence type="ECO:0000269" key="4">
    <source>
    </source>
</evidence>
<evidence type="ECO:0000305" key="5"/>